<evidence type="ECO:0000255" key="1">
    <source>
        <dbReference type="HAMAP-Rule" id="MF_00361"/>
    </source>
</evidence>
<proteinExistence type="inferred from homology"/>
<sequence>MKSKALLCINTLKSGAGILGDDIKVYLETKHFVEVVLIDVSKPLLSFPRENFLFLITLGGDGTVLLAVNLLLENKNVDIPIISINMGKVGFLADIKIEDFKKVIDRFFKNSLVINKKFLLHVTVYKHGKDLISRYALNDIIIRSSLLNKMIHVDLKVNSENFLSYKSDGIIVSTPTGSTGYSFSAGGPILEAELEGFLLTPISPHSVYNRSFVFSKLSKLSLSFSKEYFIAPASIFLDGINFGSFGVDVVFEFEISSQSLNFVSFCTDTFVKRLKNKLL</sequence>
<reference key="1">
    <citation type="journal article" date="2004" name="Nucleic Acids Res.">
        <title>Comparative analysis of the Borrelia garinii genome.</title>
        <authorList>
            <person name="Gloeckner G."/>
            <person name="Lehmann R."/>
            <person name="Romualdi A."/>
            <person name="Pradella S."/>
            <person name="Schulte-Spechtel U."/>
            <person name="Schilhabel M."/>
            <person name="Wilske B."/>
            <person name="Suehnel J."/>
            <person name="Platzer M."/>
        </authorList>
    </citation>
    <scope>NUCLEOTIDE SEQUENCE [LARGE SCALE GENOMIC DNA]</scope>
    <source>
        <strain>ATCC BAA-2496 / DSM 23469 / PBi</strain>
    </source>
</reference>
<dbReference type="EC" id="2.7.1.23" evidence="1"/>
<dbReference type="EMBL" id="CP000013">
    <property type="protein sequence ID" value="AAU07167.1"/>
    <property type="molecule type" value="Genomic_DNA"/>
</dbReference>
<dbReference type="RefSeq" id="WP_011193643.1">
    <property type="nucleotide sequence ID" value="NZ_CP028872.1"/>
</dbReference>
<dbReference type="SMR" id="Q661V4"/>
<dbReference type="GeneID" id="45161103"/>
<dbReference type="KEGG" id="bga:BG0314"/>
<dbReference type="eggNOG" id="COG0061">
    <property type="taxonomic scope" value="Bacteria"/>
</dbReference>
<dbReference type="HOGENOM" id="CLU_008831_0_0_12"/>
<dbReference type="OrthoDB" id="9774737at2"/>
<dbReference type="Proteomes" id="UP000002276">
    <property type="component" value="Chromosome"/>
</dbReference>
<dbReference type="GO" id="GO:0005737">
    <property type="term" value="C:cytoplasm"/>
    <property type="evidence" value="ECO:0007669"/>
    <property type="project" value="UniProtKB-SubCell"/>
</dbReference>
<dbReference type="GO" id="GO:0005524">
    <property type="term" value="F:ATP binding"/>
    <property type="evidence" value="ECO:0007669"/>
    <property type="project" value="UniProtKB-KW"/>
</dbReference>
<dbReference type="GO" id="GO:0046872">
    <property type="term" value="F:metal ion binding"/>
    <property type="evidence" value="ECO:0007669"/>
    <property type="project" value="UniProtKB-UniRule"/>
</dbReference>
<dbReference type="GO" id="GO:0051287">
    <property type="term" value="F:NAD binding"/>
    <property type="evidence" value="ECO:0007669"/>
    <property type="project" value="UniProtKB-ARBA"/>
</dbReference>
<dbReference type="GO" id="GO:0003951">
    <property type="term" value="F:NAD+ kinase activity"/>
    <property type="evidence" value="ECO:0007669"/>
    <property type="project" value="UniProtKB-UniRule"/>
</dbReference>
<dbReference type="GO" id="GO:0019674">
    <property type="term" value="P:NAD metabolic process"/>
    <property type="evidence" value="ECO:0007669"/>
    <property type="project" value="InterPro"/>
</dbReference>
<dbReference type="GO" id="GO:0006741">
    <property type="term" value="P:NADP biosynthetic process"/>
    <property type="evidence" value="ECO:0007669"/>
    <property type="project" value="UniProtKB-UniRule"/>
</dbReference>
<dbReference type="Gene3D" id="3.40.50.10330">
    <property type="entry name" value="Probable inorganic polyphosphate/atp-NAD kinase, domain 1"/>
    <property type="match status" value="1"/>
</dbReference>
<dbReference type="Gene3D" id="2.60.200.30">
    <property type="entry name" value="Probable inorganic polyphosphate/atp-NAD kinase, domain 2"/>
    <property type="match status" value="1"/>
</dbReference>
<dbReference type="HAMAP" id="MF_00361">
    <property type="entry name" value="NAD_kinase"/>
    <property type="match status" value="1"/>
</dbReference>
<dbReference type="InterPro" id="IPR017438">
    <property type="entry name" value="ATP-NAD_kinase_N"/>
</dbReference>
<dbReference type="InterPro" id="IPR017437">
    <property type="entry name" value="ATP-NAD_kinase_PpnK-typ_C"/>
</dbReference>
<dbReference type="InterPro" id="IPR016064">
    <property type="entry name" value="NAD/diacylglycerol_kinase_sf"/>
</dbReference>
<dbReference type="InterPro" id="IPR002504">
    <property type="entry name" value="NADK"/>
</dbReference>
<dbReference type="PANTHER" id="PTHR20275">
    <property type="entry name" value="NAD KINASE"/>
    <property type="match status" value="1"/>
</dbReference>
<dbReference type="PANTHER" id="PTHR20275:SF0">
    <property type="entry name" value="NAD KINASE"/>
    <property type="match status" value="1"/>
</dbReference>
<dbReference type="Pfam" id="PF01513">
    <property type="entry name" value="NAD_kinase"/>
    <property type="match status" value="1"/>
</dbReference>
<dbReference type="Pfam" id="PF20143">
    <property type="entry name" value="NAD_kinase_C"/>
    <property type="match status" value="1"/>
</dbReference>
<dbReference type="SUPFAM" id="SSF111331">
    <property type="entry name" value="NAD kinase/diacylglycerol kinase-like"/>
    <property type="match status" value="1"/>
</dbReference>
<feature type="chain" id="PRO_0000229616" description="NAD kinase">
    <location>
        <begin position="1"/>
        <end position="279"/>
    </location>
</feature>
<feature type="active site" description="Proton acceptor" evidence="1">
    <location>
        <position position="61"/>
    </location>
</feature>
<feature type="binding site" evidence="1">
    <location>
        <begin position="61"/>
        <end position="62"/>
    </location>
    <ligand>
        <name>NAD(+)</name>
        <dbReference type="ChEBI" id="CHEBI:57540"/>
    </ligand>
</feature>
<feature type="binding site" evidence="1">
    <location>
        <begin position="138"/>
        <end position="139"/>
    </location>
    <ligand>
        <name>NAD(+)</name>
        <dbReference type="ChEBI" id="CHEBI:57540"/>
    </ligand>
</feature>
<feature type="binding site" evidence="1">
    <location>
        <position position="149"/>
    </location>
    <ligand>
        <name>NAD(+)</name>
        <dbReference type="ChEBI" id="CHEBI:57540"/>
    </ligand>
</feature>
<feature type="binding site" evidence="1">
    <location>
        <position position="166"/>
    </location>
    <ligand>
        <name>NAD(+)</name>
        <dbReference type="ChEBI" id="CHEBI:57540"/>
    </ligand>
</feature>
<feature type="binding site" evidence="1">
    <location>
        <position position="168"/>
    </location>
    <ligand>
        <name>NAD(+)</name>
        <dbReference type="ChEBI" id="CHEBI:57540"/>
    </ligand>
</feature>
<feature type="binding site" evidence="1">
    <location>
        <begin position="179"/>
        <end position="184"/>
    </location>
    <ligand>
        <name>NAD(+)</name>
        <dbReference type="ChEBI" id="CHEBI:57540"/>
    </ligand>
</feature>
<gene>
    <name evidence="1" type="primary">nadK</name>
    <name type="ordered locus">BG0314</name>
</gene>
<name>NADK_BORGP</name>
<protein>
    <recommendedName>
        <fullName evidence="1">NAD kinase</fullName>
        <ecNumber evidence="1">2.7.1.23</ecNumber>
    </recommendedName>
    <alternativeName>
        <fullName evidence="1">ATP-dependent NAD kinase</fullName>
    </alternativeName>
</protein>
<accession>Q661V4</accession>
<keyword id="KW-0067">ATP-binding</keyword>
<keyword id="KW-0963">Cytoplasm</keyword>
<keyword id="KW-0418">Kinase</keyword>
<keyword id="KW-0520">NAD</keyword>
<keyword id="KW-0521">NADP</keyword>
<keyword id="KW-0547">Nucleotide-binding</keyword>
<keyword id="KW-0808">Transferase</keyword>
<comment type="function">
    <text evidence="1">Involved in the regulation of the intracellular balance of NAD and NADP, and is a key enzyme in the biosynthesis of NADP. Catalyzes specifically the phosphorylation on 2'-hydroxyl of the adenosine moiety of NAD to yield NADP.</text>
</comment>
<comment type="catalytic activity">
    <reaction evidence="1">
        <text>NAD(+) + ATP = ADP + NADP(+) + H(+)</text>
        <dbReference type="Rhea" id="RHEA:18629"/>
        <dbReference type="ChEBI" id="CHEBI:15378"/>
        <dbReference type="ChEBI" id="CHEBI:30616"/>
        <dbReference type="ChEBI" id="CHEBI:57540"/>
        <dbReference type="ChEBI" id="CHEBI:58349"/>
        <dbReference type="ChEBI" id="CHEBI:456216"/>
        <dbReference type="EC" id="2.7.1.23"/>
    </reaction>
</comment>
<comment type="cofactor">
    <cofactor evidence="1">
        <name>a divalent metal cation</name>
        <dbReference type="ChEBI" id="CHEBI:60240"/>
    </cofactor>
</comment>
<comment type="subcellular location">
    <subcellularLocation>
        <location evidence="1">Cytoplasm</location>
    </subcellularLocation>
</comment>
<comment type="similarity">
    <text evidence="1">Belongs to the NAD kinase family.</text>
</comment>
<organism>
    <name type="scientific">Borrelia garinii subsp. bavariensis (strain ATCC BAA-2496 / DSM 23469 / PBi)</name>
    <name type="common">Borreliella bavariensis</name>
    <dbReference type="NCBI Taxonomy" id="290434"/>
    <lineage>
        <taxon>Bacteria</taxon>
        <taxon>Pseudomonadati</taxon>
        <taxon>Spirochaetota</taxon>
        <taxon>Spirochaetia</taxon>
        <taxon>Spirochaetales</taxon>
        <taxon>Borreliaceae</taxon>
        <taxon>Borreliella</taxon>
    </lineage>
</organism>